<name>RNB_ACTP7</name>
<keyword id="KW-0963">Cytoplasm</keyword>
<keyword id="KW-0269">Exonuclease</keyword>
<keyword id="KW-0378">Hydrolase</keyword>
<keyword id="KW-0540">Nuclease</keyword>
<keyword id="KW-0694">RNA-binding</keyword>
<protein>
    <recommendedName>
        <fullName evidence="2">Exoribonuclease 2</fullName>
        <ecNumber evidence="2">3.1.13.1</ecNumber>
    </recommendedName>
    <alternativeName>
        <fullName evidence="2">Exoribonuclease II</fullName>
        <shortName evidence="2">RNase II</shortName>
        <shortName evidence="2">Ribonuclease II</shortName>
    </alternativeName>
</protein>
<evidence type="ECO:0000255" key="1"/>
<evidence type="ECO:0000255" key="2">
    <source>
        <dbReference type="HAMAP-Rule" id="MF_01036"/>
    </source>
</evidence>
<sequence length="658" mass="75731">MFQNNPLLAQLKQQIEANKEYVEGTVKASDKAFGFLECDKKSYFIPPMEMKKVMHGDKVKAVVKREDDKEQVEIDSLLEPMLDRFIAQVRFNKDNKLQLIVDHPSIKNIIPANTHKKVTETLESGDWVVAQLKTHPLRDDRFLFAQVTQFICKADDNFAPWWVTLARHEQPREPVANEKSYELHDELDREDLTSLYFTTIDSPSTQDMDDALYIEPIKQGEVQTGWRLVVAIADPTAYIPENSNLEKAARQRCFTNYLPGFNIPMLPRELSDDLCSLVPNEKRPALVGYIETDLAGNITGDTRFVSAWVESKAKLAYDNVSDYLEQVENAWQPESAETKQQIDWLHQFTLARIEWRRNNALLFKESGDYSFELNEDGSVRDIHVEYRRIANQMIEESMIIANICCAKFLADNAKTGVFNTHAGFDPKNLELAQKFLLDTLANDENRDALTALYAPEKLATLEGYCEMRRSIDEFPEKFLELRLRRYLTFAEFKSEVAPHLGLGISHYATWTSPIRKYGDMVNHRLIKQVLLGKQAKTVEEGILVRLQEARRQNRLVERDIADWLYARYLFPMVEQAVEFDCEIADVSRGGVRAKVIANGAQIFVPFSTLHDKKEEMEFRPEEIALYIKGEKAYQIGQAVKVKLTEVRLETRSIVGNII</sequence>
<feature type="chain" id="PRO_1000135859" description="Exoribonuclease 2">
    <location>
        <begin position="1"/>
        <end position="658"/>
    </location>
</feature>
<feature type="domain" description="RNB" evidence="1">
    <location>
        <begin position="189"/>
        <end position="530"/>
    </location>
</feature>
<feature type="domain" description="S1 motif" evidence="2">
    <location>
        <begin position="576"/>
        <end position="658"/>
    </location>
</feature>
<proteinExistence type="inferred from homology"/>
<reference key="1">
    <citation type="submission" date="2008-06" db="EMBL/GenBank/DDBJ databases">
        <title>Genome and proteome analysis of A. pleuropneumoniae serotype 7.</title>
        <authorList>
            <person name="Linke B."/>
            <person name="Buettner F."/>
            <person name="Martinez-Arias R."/>
            <person name="Goesmann A."/>
            <person name="Baltes N."/>
            <person name="Tegetmeyer H."/>
            <person name="Singh M."/>
            <person name="Gerlach G.F."/>
        </authorList>
    </citation>
    <scope>NUCLEOTIDE SEQUENCE [LARGE SCALE GENOMIC DNA]</scope>
    <source>
        <strain>AP76</strain>
    </source>
</reference>
<accession>B3GXJ4</accession>
<dbReference type="EC" id="3.1.13.1" evidence="2"/>
<dbReference type="EMBL" id="CP001091">
    <property type="protein sequence ID" value="ACE61453.1"/>
    <property type="molecule type" value="Genomic_DNA"/>
</dbReference>
<dbReference type="RefSeq" id="WP_005617246.1">
    <property type="nucleotide sequence ID" value="NC_010939.1"/>
</dbReference>
<dbReference type="SMR" id="B3GXJ4"/>
<dbReference type="KEGG" id="apa:APP7_0801"/>
<dbReference type="HOGENOM" id="CLU_002333_7_3_6"/>
<dbReference type="Proteomes" id="UP000001226">
    <property type="component" value="Chromosome"/>
</dbReference>
<dbReference type="GO" id="GO:0005829">
    <property type="term" value="C:cytosol"/>
    <property type="evidence" value="ECO:0007669"/>
    <property type="project" value="TreeGrafter"/>
</dbReference>
<dbReference type="GO" id="GO:0008859">
    <property type="term" value="F:exoribonuclease II activity"/>
    <property type="evidence" value="ECO:0007669"/>
    <property type="project" value="UniProtKB-UniRule"/>
</dbReference>
<dbReference type="GO" id="GO:0003723">
    <property type="term" value="F:RNA binding"/>
    <property type="evidence" value="ECO:0007669"/>
    <property type="project" value="UniProtKB-KW"/>
</dbReference>
<dbReference type="GO" id="GO:0006402">
    <property type="term" value="P:mRNA catabolic process"/>
    <property type="evidence" value="ECO:0007669"/>
    <property type="project" value="UniProtKB-UniRule"/>
</dbReference>
<dbReference type="Gene3D" id="2.40.50.640">
    <property type="match status" value="1"/>
</dbReference>
<dbReference type="Gene3D" id="2.40.50.140">
    <property type="entry name" value="Nucleic acid-binding proteins"/>
    <property type="match status" value="2"/>
</dbReference>
<dbReference type="HAMAP" id="MF_01036">
    <property type="entry name" value="RNase_II"/>
    <property type="match status" value="1"/>
</dbReference>
<dbReference type="InterPro" id="IPR011129">
    <property type="entry name" value="CSD"/>
</dbReference>
<dbReference type="InterPro" id="IPR012340">
    <property type="entry name" value="NA-bd_OB-fold"/>
</dbReference>
<dbReference type="InterPro" id="IPR013223">
    <property type="entry name" value="RNase_B_OB_dom"/>
</dbReference>
<dbReference type="InterPro" id="IPR011804">
    <property type="entry name" value="RNase_II"/>
</dbReference>
<dbReference type="InterPro" id="IPR001900">
    <property type="entry name" value="RNase_II/R"/>
</dbReference>
<dbReference type="InterPro" id="IPR004476">
    <property type="entry name" value="RNase_II/RNase_R"/>
</dbReference>
<dbReference type="InterPro" id="IPR050180">
    <property type="entry name" value="RNR_Ribonuclease"/>
</dbReference>
<dbReference type="InterPro" id="IPR003029">
    <property type="entry name" value="S1_domain"/>
</dbReference>
<dbReference type="NCBIfam" id="TIGR00358">
    <property type="entry name" value="3_prime_RNase"/>
    <property type="match status" value="1"/>
</dbReference>
<dbReference type="NCBIfam" id="NF003455">
    <property type="entry name" value="PRK05054.1"/>
    <property type="match status" value="1"/>
</dbReference>
<dbReference type="NCBIfam" id="TIGR02062">
    <property type="entry name" value="RNase_B"/>
    <property type="match status" value="1"/>
</dbReference>
<dbReference type="PANTHER" id="PTHR23355:SF37">
    <property type="entry name" value="EXORIBONUCLEASE 2"/>
    <property type="match status" value="1"/>
</dbReference>
<dbReference type="PANTHER" id="PTHR23355">
    <property type="entry name" value="RIBONUCLEASE"/>
    <property type="match status" value="1"/>
</dbReference>
<dbReference type="Pfam" id="PF08206">
    <property type="entry name" value="OB_RNB"/>
    <property type="match status" value="1"/>
</dbReference>
<dbReference type="Pfam" id="PF00773">
    <property type="entry name" value="RNB"/>
    <property type="match status" value="1"/>
</dbReference>
<dbReference type="Pfam" id="PF00575">
    <property type="entry name" value="S1"/>
    <property type="match status" value="1"/>
</dbReference>
<dbReference type="SMART" id="SM00357">
    <property type="entry name" value="CSP"/>
    <property type="match status" value="1"/>
</dbReference>
<dbReference type="SMART" id="SM00955">
    <property type="entry name" value="RNB"/>
    <property type="match status" value="1"/>
</dbReference>
<dbReference type="SMART" id="SM00316">
    <property type="entry name" value="S1"/>
    <property type="match status" value="2"/>
</dbReference>
<dbReference type="SUPFAM" id="SSF50249">
    <property type="entry name" value="Nucleic acid-binding proteins"/>
    <property type="match status" value="4"/>
</dbReference>
<comment type="function">
    <text evidence="2">Involved in mRNA degradation. Hydrolyzes single-stranded polyribonucleotides processively in the 3' to 5' direction.</text>
</comment>
<comment type="catalytic activity">
    <reaction evidence="2">
        <text>Exonucleolytic cleavage in the 3'- to 5'-direction to yield nucleoside 5'-phosphates.</text>
        <dbReference type="EC" id="3.1.13.1"/>
    </reaction>
</comment>
<comment type="subcellular location">
    <subcellularLocation>
        <location evidence="2">Cytoplasm</location>
    </subcellularLocation>
</comment>
<comment type="similarity">
    <text evidence="2">Belongs to the RNR ribonuclease family. RNase II subfamily.</text>
</comment>
<gene>
    <name evidence="2" type="primary">rnb</name>
    <name type="ordered locus">APP7_0801</name>
</gene>
<organism>
    <name type="scientific">Actinobacillus pleuropneumoniae serotype 7 (strain AP76)</name>
    <dbReference type="NCBI Taxonomy" id="537457"/>
    <lineage>
        <taxon>Bacteria</taxon>
        <taxon>Pseudomonadati</taxon>
        <taxon>Pseudomonadota</taxon>
        <taxon>Gammaproteobacteria</taxon>
        <taxon>Pasteurellales</taxon>
        <taxon>Pasteurellaceae</taxon>
        <taxon>Actinobacillus</taxon>
    </lineage>
</organism>